<protein>
    <recommendedName>
        <fullName evidence="1">3-isopropylmalate dehydratase large subunit</fullName>
        <ecNumber evidence="1">4.2.1.33</ecNumber>
    </recommendedName>
    <alternativeName>
        <fullName evidence="1">Alpha-IPM isomerase</fullName>
        <shortName evidence="1">IPMI</shortName>
    </alternativeName>
    <alternativeName>
        <fullName evidence="1">Isopropylmalate isomerase</fullName>
    </alternativeName>
</protein>
<comment type="function">
    <text evidence="1">Catalyzes the isomerization between 2-isopropylmalate and 3-isopropylmalate, via the formation of 2-isopropylmaleate.</text>
</comment>
<comment type="catalytic activity">
    <reaction evidence="1">
        <text>(2R,3S)-3-isopropylmalate = (2S)-2-isopropylmalate</text>
        <dbReference type="Rhea" id="RHEA:32287"/>
        <dbReference type="ChEBI" id="CHEBI:1178"/>
        <dbReference type="ChEBI" id="CHEBI:35121"/>
        <dbReference type="EC" id="4.2.1.33"/>
    </reaction>
</comment>
<comment type="cofactor">
    <cofactor evidence="1">
        <name>[4Fe-4S] cluster</name>
        <dbReference type="ChEBI" id="CHEBI:49883"/>
    </cofactor>
    <text evidence="1">Binds 1 [4Fe-4S] cluster per subunit.</text>
</comment>
<comment type="pathway">
    <text evidence="1">Amino-acid biosynthesis; L-leucine biosynthesis; L-leucine from 3-methyl-2-oxobutanoate: step 2/4.</text>
</comment>
<comment type="subunit">
    <text evidence="1">Heterodimer of LeuC and LeuD.</text>
</comment>
<comment type="similarity">
    <text evidence="1">Belongs to the aconitase/IPM isomerase family. LeuC type 1 subfamily.</text>
</comment>
<gene>
    <name evidence="1" type="primary">leuC</name>
    <name type="ordered locus">Mmc1_1779</name>
</gene>
<reference key="1">
    <citation type="journal article" date="2009" name="Appl. Environ. Microbiol.">
        <title>Complete genome sequence of the chemolithoautotrophic marine magnetotactic coccus strain MC-1.</title>
        <authorList>
            <person name="Schubbe S."/>
            <person name="Williams T.J."/>
            <person name="Xie G."/>
            <person name="Kiss H.E."/>
            <person name="Brettin T.S."/>
            <person name="Martinez D."/>
            <person name="Ross C.A."/>
            <person name="Schuler D."/>
            <person name="Cox B.L."/>
            <person name="Nealson K.H."/>
            <person name="Bazylinski D.A."/>
        </authorList>
    </citation>
    <scope>NUCLEOTIDE SEQUENCE [LARGE SCALE GENOMIC DNA]</scope>
    <source>
        <strain>ATCC BAA-1437 / JCM 17883 / MC-1</strain>
    </source>
</reference>
<organism>
    <name type="scientific">Magnetococcus marinus (strain ATCC BAA-1437 / JCM 17883 / MC-1)</name>
    <dbReference type="NCBI Taxonomy" id="156889"/>
    <lineage>
        <taxon>Bacteria</taxon>
        <taxon>Pseudomonadati</taxon>
        <taxon>Pseudomonadota</taxon>
        <taxon>Alphaproteobacteria</taxon>
        <taxon>Magnetococcales</taxon>
        <taxon>Magnetococcaceae</taxon>
        <taxon>Magnetococcus</taxon>
    </lineage>
</organism>
<keyword id="KW-0004">4Fe-4S</keyword>
<keyword id="KW-0028">Amino-acid biosynthesis</keyword>
<keyword id="KW-0100">Branched-chain amino acid biosynthesis</keyword>
<keyword id="KW-0408">Iron</keyword>
<keyword id="KW-0411">Iron-sulfur</keyword>
<keyword id="KW-0432">Leucine biosynthesis</keyword>
<keyword id="KW-0456">Lyase</keyword>
<keyword id="KW-0479">Metal-binding</keyword>
<keyword id="KW-1185">Reference proteome</keyword>
<accession>A0L8J4</accession>
<proteinExistence type="inferred from homology"/>
<sequence>MSAQTLFEKIWNAHLIRTDEDGTSLIYIDRHLVHEVTSPQAFEGLRLAGRKVRHPEATFAVPDHNVPTKDLAGGIKDPVSKLQVDTLASNCQAFGITEFGVGDLRQGVVHVMAPEQGISLPGFTMVCGDSHTATHGAFGALAFGIGTSEVEHVLATQTLMQKKPKTMLIQVEGELPAGSTAKDIILYIIGNIGTAGGTGYVLEFGGSAIQALSMEGRMTVCNMAIEAGARAGMVAVDEKTIAYVQGRPYAPKGEAWEKAVAQWQTLKSDEGAPFDAVVTLDARNIAPQVTWGTSPELVAPVDGCVPNPTDEPNGVKRGAMEKALAYMGLQAGTPMTEIAVDKVFIGSCTNSRIEDLRAAAVAVAGKKVAASIKLALVVPGTGLVKQQAEQEGLDKIFMEAGFEWREPGCSMCLAMNNDVLEPGERCASTSNRNFEGRQGKDSRTHLVSPAMAAAAAIAGHFVDIRNG</sequence>
<feature type="chain" id="PRO_0000319816" description="3-isopropylmalate dehydratase large subunit">
    <location>
        <begin position="1"/>
        <end position="467"/>
    </location>
</feature>
<feature type="binding site" evidence="1">
    <location>
        <position position="348"/>
    </location>
    <ligand>
        <name>[4Fe-4S] cluster</name>
        <dbReference type="ChEBI" id="CHEBI:49883"/>
    </ligand>
</feature>
<feature type="binding site" evidence="1">
    <location>
        <position position="409"/>
    </location>
    <ligand>
        <name>[4Fe-4S] cluster</name>
        <dbReference type="ChEBI" id="CHEBI:49883"/>
    </ligand>
</feature>
<feature type="binding site" evidence="1">
    <location>
        <position position="412"/>
    </location>
    <ligand>
        <name>[4Fe-4S] cluster</name>
        <dbReference type="ChEBI" id="CHEBI:49883"/>
    </ligand>
</feature>
<name>LEUC_MAGMM</name>
<dbReference type="EC" id="4.2.1.33" evidence="1"/>
<dbReference type="EMBL" id="CP000471">
    <property type="protein sequence ID" value="ABK44287.1"/>
    <property type="molecule type" value="Genomic_DNA"/>
</dbReference>
<dbReference type="RefSeq" id="WP_011713434.1">
    <property type="nucleotide sequence ID" value="NC_008576.1"/>
</dbReference>
<dbReference type="SMR" id="A0L8J4"/>
<dbReference type="STRING" id="156889.Mmc1_1779"/>
<dbReference type="KEGG" id="mgm:Mmc1_1779"/>
<dbReference type="eggNOG" id="COG0065">
    <property type="taxonomic scope" value="Bacteria"/>
</dbReference>
<dbReference type="HOGENOM" id="CLU_006714_3_4_5"/>
<dbReference type="OrthoDB" id="9802769at2"/>
<dbReference type="UniPathway" id="UPA00048">
    <property type="reaction ID" value="UER00071"/>
</dbReference>
<dbReference type="Proteomes" id="UP000002586">
    <property type="component" value="Chromosome"/>
</dbReference>
<dbReference type="GO" id="GO:0003861">
    <property type="term" value="F:3-isopropylmalate dehydratase activity"/>
    <property type="evidence" value="ECO:0007669"/>
    <property type="project" value="UniProtKB-UniRule"/>
</dbReference>
<dbReference type="GO" id="GO:0051539">
    <property type="term" value="F:4 iron, 4 sulfur cluster binding"/>
    <property type="evidence" value="ECO:0007669"/>
    <property type="project" value="UniProtKB-KW"/>
</dbReference>
<dbReference type="GO" id="GO:0046872">
    <property type="term" value="F:metal ion binding"/>
    <property type="evidence" value="ECO:0007669"/>
    <property type="project" value="UniProtKB-KW"/>
</dbReference>
<dbReference type="GO" id="GO:0009098">
    <property type="term" value="P:L-leucine biosynthetic process"/>
    <property type="evidence" value="ECO:0007669"/>
    <property type="project" value="UniProtKB-UniRule"/>
</dbReference>
<dbReference type="CDD" id="cd01583">
    <property type="entry name" value="IPMI"/>
    <property type="match status" value="1"/>
</dbReference>
<dbReference type="FunFam" id="3.30.499.10:FF:000007">
    <property type="entry name" value="3-isopropylmalate dehydratase large subunit"/>
    <property type="match status" value="1"/>
</dbReference>
<dbReference type="Gene3D" id="3.30.499.10">
    <property type="entry name" value="Aconitase, domain 3"/>
    <property type="match status" value="2"/>
</dbReference>
<dbReference type="HAMAP" id="MF_01026">
    <property type="entry name" value="LeuC_type1"/>
    <property type="match status" value="1"/>
</dbReference>
<dbReference type="InterPro" id="IPR004430">
    <property type="entry name" value="3-IsopropMal_deHydase_lsu"/>
</dbReference>
<dbReference type="InterPro" id="IPR015931">
    <property type="entry name" value="Acnase/IPM_dHydase_lsu_aba_1/3"/>
</dbReference>
<dbReference type="InterPro" id="IPR001030">
    <property type="entry name" value="Acoase/IPM_deHydtase_lsu_aba"/>
</dbReference>
<dbReference type="InterPro" id="IPR018136">
    <property type="entry name" value="Aconitase_4Fe-4S_BS"/>
</dbReference>
<dbReference type="InterPro" id="IPR036008">
    <property type="entry name" value="Aconitase_4Fe-4S_dom"/>
</dbReference>
<dbReference type="InterPro" id="IPR050067">
    <property type="entry name" value="IPM_dehydratase_rel_enz"/>
</dbReference>
<dbReference type="InterPro" id="IPR033941">
    <property type="entry name" value="IPMI_cat"/>
</dbReference>
<dbReference type="NCBIfam" id="TIGR00170">
    <property type="entry name" value="leuC"/>
    <property type="match status" value="1"/>
</dbReference>
<dbReference type="NCBIfam" id="NF004016">
    <property type="entry name" value="PRK05478.1"/>
    <property type="match status" value="1"/>
</dbReference>
<dbReference type="NCBIfam" id="NF009116">
    <property type="entry name" value="PRK12466.1"/>
    <property type="match status" value="1"/>
</dbReference>
<dbReference type="PANTHER" id="PTHR43822:SF9">
    <property type="entry name" value="3-ISOPROPYLMALATE DEHYDRATASE"/>
    <property type="match status" value="1"/>
</dbReference>
<dbReference type="PANTHER" id="PTHR43822">
    <property type="entry name" value="HOMOACONITASE, MITOCHONDRIAL-RELATED"/>
    <property type="match status" value="1"/>
</dbReference>
<dbReference type="Pfam" id="PF00330">
    <property type="entry name" value="Aconitase"/>
    <property type="match status" value="1"/>
</dbReference>
<dbReference type="PRINTS" id="PR00415">
    <property type="entry name" value="ACONITASE"/>
</dbReference>
<dbReference type="SUPFAM" id="SSF53732">
    <property type="entry name" value="Aconitase iron-sulfur domain"/>
    <property type="match status" value="1"/>
</dbReference>
<dbReference type="PROSITE" id="PS00450">
    <property type="entry name" value="ACONITASE_1"/>
    <property type="match status" value="1"/>
</dbReference>
<dbReference type="PROSITE" id="PS01244">
    <property type="entry name" value="ACONITASE_2"/>
    <property type="match status" value="1"/>
</dbReference>
<evidence type="ECO:0000255" key="1">
    <source>
        <dbReference type="HAMAP-Rule" id="MF_01026"/>
    </source>
</evidence>